<proteinExistence type="evidence at protein level"/>
<organism evidence="6">
    <name type="scientific">Plasmodium berghei (strain Anka)</name>
    <dbReference type="NCBI Taxonomy" id="5823"/>
    <lineage>
        <taxon>Eukaryota</taxon>
        <taxon>Sar</taxon>
        <taxon>Alveolata</taxon>
        <taxon>Apicomplexa</taxon>
        <taxon>Aconoidasida</taxon>
        <taxon>Haemosporida</taxon>
        <taxon>Plasmodiidae</taxon>
        <taxon>Plasmodium</taxon>
        <taxon>Plasmodium (Vinckeia)</taxon>
    </lineage>
</organism>
<accession>A0A509AQJ1</accession>
<comment type="function">
    <text evidence="1">Participates in the sulfur mobilization (SUF) pathway for iron-sulfur (Fe-S) cluster biogenesis. As part of a complex consisting of SufB-SufC(2)-SufD, involved in assembly of [4Fe-4S] clusters. Enhances the ATPase activity of SufC.</text>
</comment>
<comment type="pathway">
    <text evidence="4">Cofactor biosynthesis; iron-sulfur cluster biosynthesis.</text>
</comment>
<comment type="subunit">
    <text evidence="1">Component of a complex composed of SufB, SufC and SufD in a stoichiometric ratio of 1:2:1. Interacts with SufB. Interacts with SufC; the interaction enhances the ATPase activity of SufC.</text>
</comment>
<comment type="subcellular location">
    <subcellularLocation>
        <location evidence="3">Plastid</location>
        <location evidence="3">Apicoplast</location>
    </subcellularLocation>
</comment>
<comment type="developmental stage">
    <text evidence="3">Expressed in trophozoites (at protein level) (PubMed:24586983). Expressed in developing liver stage parasites (PubMed:24586983).</text>
</comment>
<comment type="disruption phenotype">
    <text evidence="3">Repeated attempts to isolate gene deletion mutant failed, suggesting an essential role of the gene during asexual blood stage growth.</text>
</comment>
<comment type="similarity">
    <text evidence="4">Belongs to the iron-sulfur cluster assembly SufBD family.</text>
</comment>
<name>SUFD_PLABA</name>
<dbReference type="EMBL" id="LK023124">
    <property type="protein sequence ID" value="VUC55977.1"/>
    <property type="molecule type" value="Genomic_DNA"/>
</dbReference>
<dbReference type="SMR" id="A0A509AQJ1"/>
<dbReference type="FunCoup" id="A0A509AQJ1">
    <property type="interactions" value="3"/>
</dbReference>
<dbReference type="STRING" id="5823.A0A509AQJ1"/>
<dbReference type="VEuPathDB" id="PlasmoDB:PBANKA_0943500"/>
<dbReference type="InParanoid" id="A0A509AQJ1"/>
<dbReference type="OMA" id="YKKNTQP"/>
<dbReference type="UniPathway" id="UPA00266"/>
<dbReference type="Proteomes" id="UP000074855">
    <property type="component" value="Chromosome 9"/>
</dbReference>
<dbReference type="GO" id="GO:0020011">
    <property type="term" value="C:apicoplast"/>
    <property type="evidence" value="ECO:0007669"/>
    <property type="project" value="UniProtKB-SubCell"/>
</dbReference>
<dbReference type="GO" id="GO:0051539">
    <property type="term" value="F:4 iron, 4 sulfur cluster binding"/>
    <property type="evidence" value="ECO:0007669"/>
    <property type="project" value="UniProtKB-KW"/>
</dbReference>
<dbReference type="GO" id="GO:0046872">
    <property type="term" value="F:metal ion binding"/>
    <property type="evidence" value="ECO:0007669"/>
    <property type="project" value="UniProtKB-KW"/>
</dbReference>
<dbReference type="GO" id="GO:0016226">
    <property type="term" value="P:iron-sulfur cluster assembly"/>
    <property type="evidence" value="ECO:0007669"/>
    <property type="project" value="InterPro"/>
</dbReference>
<dbReference type="InterPro" id="IPR055346">
    <property type="entry name" value="Fe-S_cluster_assembly_SufBD"/>
</dbReference>
<dbReference type="InterPro" id="IPR000825">
    <property type="entry name" value="SUF_FeS_clus_asmbl_SufBD_core"/>
</dbReference>
<dbReference type="InterPro" id="IPR037284">
    <property type="entry name" value="SUF_FeS_clus_asmbl_SufBD_sf"/>
</dbReference>
<dbReference type="PANTHER" id="PTHR43575">
    <property type="entry name" value="PROTEIN ABCI7, CHLOROPLASTIC"/>
    <property type="match status" value="1"/>
</dbReference>
<dbReference type="PANTHER" id="PTHR43575:SF1">
    <property type="entry name" value="PROTEIN ABCI7, CHLOROPLASTIC"/>
    <property type="match status" value="1"/>
</dbReference>
<dbReference type="Pfam" id="PF01458">
    <property type="entry name" value="SUFBD_core"/>
    <property type="match status" value="1"/>
</dbReference>
<dbReference type="SUPFAM" id="SSF101960">
    <property type="entry name" value="Stabilizer of iron transporter SufD"/>
    <property type="match status" value="1"/>
</dbReference>
<gene>
    <name evidence="4" type="primary">SufD</name>
    <name evidence="5" type="ORF">PBANKA_0943500</name>
</gene>
<protein>
    <recommendedName>
        <fullName evidence="4">Iron-sulfur cluster assembly protein SufD</fullName>
    </recommendedName>
</protein>
<evidence type="ECO:0000250" key="1">
    <source>
        <dbReference type="UniProtKB" id="Q8IIW9"/>
    </source>
</evidence>
<evidence type="ECO:0000256" key="2">
    <source>
        <dbReference type="SAM" id="MobiDB-lite"/>
    </source>
</evidence>
<evidence type="ECO:0000269" key="3">
    <source>
    </source>
</evidence>
<evidence type="ECO:0000305" key="4"/>
<evidence type="ECO:0000312" key="5">
    <source>
        <dbReference type="EMBL" id="VUC55977.1"/>
    </source>
</evidence>
<evidence type="ECO:0000312" key="6">
    <source>
        <dbReference type="Proteomes" id="UP000074855"/>
    </source>
</evidence>
<feature type="chain" id="PRO_0000459591" description="Iron-sulfur cluster assembly protein SufD">
    <location>
        <begin position="1"/>
        <end position="1340"/>
    </location>
</feature>
<feature type="region of interest" description="Disordered" evidence="2">
    <location>
        <begin position="477"/>
        <end position="498"/>
    </location>
</feature>
<feature type="region of interest" description="Disordered" evidence="2">
    <location>
        <begin position="723"/>
        <end position="743"/>
    </location>
</feature>
<feature type="region of interest" description="Disordered" evidence="2">
    <location>
        <begin position="765"/>
        <end position="794"/>
    </location>
</feature>
<feature type="region of interest" description="Disordered" evidence="2">
    <location>
        <begin position="835"/>
        <end position="865"/>
    </location>
</feature>
<feature type="region of interest" description="Disordered" evidence="2">
    <location>
        <begin position="992"/>
        <end position="1055"/>
    </location>
</feature>
<feature type="compositionally biased region" description="Low complexity" evidence="2">
    <location>
        <begin position="477"/>
        <end position="487"/>
    </location>
</feature>
<feature type="compositionally biased region" description="Basic and acidic residues" evidence="2">
    <location>
        <begin position="723"/>
        <end position="734"/>
    </location>
</feature>
<feature type="compositionally biased region" description="Polar residues" evidence="2">
    <location>
        <begin position="782"/>
        <end position="794"/>
    </location>
</feature>
<feature type="compositionally biased region" description="Polar residues" evidence="2">
    <location>
        <begin position="1022"/>
        <end position="1037"/>
    </location>
</feature>
<sequence>MPNITLLKRMLVFLLLNNYFINHFNCVKCKNLNTLCIHNTNLRKTVEVKRKEATKNQIKKEVNKSDKLNVQCSPPQNIYLSDRSEDKYYLNKNKNEIHIIHFGNGLHEKYENLPIENNNYNEIIISKYNTKNKENTEKDLYTKHINKRCYLNGNPINFKILTSLYKWINSKKLHKHIKSKSAKVDKQSPPYMSIYINYGFTKPKLLFINYLSTKYKNNGKNKYLKKYLRKYEELYEKYTYELDEQNDTDVISQNNREPMPNYSIDDFLIQNKNKNYKVTLVYDYISNLHNNEYQNVESVNNFIKNNELFDINEWKKNNKPYLIYKYKYKYKNPINKQIHFYEYDYYVPKLITYEEDISTEPKFVSPNLNSTKCYNNSPINFLTTSGFSSRNIDTFGKERNKIYSFNTPTDVKRNIYFNDLIKISSSYNQHFFHNLNFLLNLYTLQILIRDKTAIETDYIIDKFDQLKDKLIQLNTHNSLKHNNNNTKPSSQKYEERSSQDSGSFINSYYKTDQATPQNADYHYEDVNSPQTFVNFEDNIKLNGKISSDENLKKKENTKNEINDNYDNELDREISRHLTHKKNLFDDKIQIFKNKYNENILEDTDFIKLWKYDQNGEIIEALNQVPVPKIYLNIDAPKYCLWKILQNSGKNAYSEIPTPNRKLEAWRQQVNLKFFYKQNFDTSISLRNISKEELSNFKMKIVESTNQNEKHHSDQYTQINCQEHGKDNTQHDDKNNPNFRNYLNDKKTHKKNAESNILQTDKITYNVSTDEKRETQYDVKGNNPDTETNNEQSTVNKLKEKHKKAFYTLVVRDGIIDEILSDDISILKKLNQELKEKNESNEGKGNDLDATEQRENEQVGPNGEKKTTSKIFVGSFFNIKDPEVEYLINKELYFIPEHTNWYKKNTQPFVRGQIGKQSRKFDNDYPIYDYRKSDFGMAKFSALNLASIKDCAVLYLDKDIDLSDKFFHIIFISTSKNEDENLQNDQSYVVYENIPTDKQSPNLEKKQPSDEIYNEDEDHETSDNLLQNDQATNSNVEINHQDDKGNEPNSITNNIQKNNNYKKNEITNSIHNPITNPRLVLYIKENSKINIHESHISLNNNNGGMVNALSRIYLEQNSKVNHILSQELGKSAWYFHNVSVQNGINSNYKFVDILLGSLSSRVNLQIEGSQGSKQQSYGLSLLEGKQNISQYEMFHHEHSSMQTDQLFKSLVSDTAHSVWRSRGRIERNAIKAKLNTLCRSVLLNLGASAVAIPTLEIIPSDIEEANHGATISDLEEEPIFSLMSRGIDTNIARRIMMKAFVNEILEHVPDENLKNKVYQKIFKFSQKYKDESKKILRMTNL</sequence>
<keyword id="KW-0004">4Fe-4S</keyword>
<keyword id="KW-0933">Apicoplast</keyword>
<keyword id="KW-0408">Iron</keyword>
<keyword id="KW-0411">Iron-sulfur</keyword>
<keyword id="KW-0479">Metal-binding</keyword>
<keyword id="KW-0934">Plastid</keyword>
<keyword id="KW-1185">Reference proteome</keyword>
<reference evidence="6" key="1">
    <citation type="journal article" date="2014" name="BMC Biol.">
        <title>A comprehensive evaluation of rodent malaria parasite genomes and gene expression.</title>
        <authorList>
            <person name="Otto T.D."/>
            <person name="Bohme U."/>
            <person name="Jackson A.P."/>
            <person name="Hunt M."/>
            <person name="Franke-Fayard B."/>
            <person name="Hoeijmakers W.A."/>
            <person name="Religa A.A."/>
            <person name="Robertson L."/>
            <person name="Sanders M."/>
            <person name="Ogun S.A."/>
            <person name="Cunningham D."/>
            <person name="Erhart A."/>
            <person name="Billker O."/>
            <person name="Khan S.M."/>
            <person name="Stunnenberg H.G."/>
            <person name="Langhorne J."/>
            <person name="Holder A.A."/>
            <person name="Waters A.P."/>
            <person name="Newbold C.I."/>
            <person name="Pain A."/>
            <person name="Berriman M."/>
            <person name="Janse C.J."/>
        </authorList>
    </citation>
    <scope>NUCLEOTIDE SEQUENCE [LARGE SCALE GENOMIC DNA]</scope>
    <source>
        <strain evidence="6">ANKA</strain>
    </source>
</reference>
<reference evidence="4" key="2">
    <citation type="journal article" date="2014" name="PLoS ONE">
        <title>Identification of vital and dispensable sulfur utilization factors in the Plasmodium apicoplast.</title>
        <authorList>
            <person name="Haussig J.M."/>
            <person name="Matuschewski K."/>
            <person name="Kooij T.W."/>
        </authorList>
    </citation>
    <scope>SUBCELLULAR LOCATION</scope>
    <scope>DEVELOPMENTAL STAGE</scope>
    <scope>DISRUPTION PHENOTYPE</scope>
</reference>